<protein>
    <recommendedName>
        <fullName evidence="1">Large ribosomal subunit protein bL36</fullName>
    </recommendedName>
    <alternativeName>
        <fullName evidence="2">50S ribosomal protein L36</fullName>
    </alternativeName>
</protein>
<keyword id="KW-1185">Reference proteome</keyword>
<keyword id="KW-0687">Ribonucleoprotein</keyword>
<keyword id="KW-0689">Ribosomal protein</keyword>
<sequence>MKVRASVKKICRNCKIVKRSGVVRVICVEPKHKQRQG</sequence>
<organism>
    <name type="scientific">Shewanella denitrificans (strain OS217 / ATCC BAA-1090 / DSM 15013)</name>
    <dbReference type="NCBI Taxonomy" id="318161"/>
    <lineage>
        <taxon>Bacteria</taxon>
        <taxon>Pseudomonadati</taxon>
        <taxon>Pseudomonadota</taxon>
        <taxon>Gammaproteobacteria</taxon>
        <taxon>Alteromonadales</taxon>
        <taxon>Shewanellaceae</taxon>
        <taxon>Shewanella</taxon>
    </lineage>
</organism>
<accession>Q12ST8</accession>
<name>RL36_SHEDO</name>
<dbReference type="EMBL" id="CP000302">
    <property type="protein sequence ID" value="ABE53488.1"/>
    <property type="status" value="ALT_INIT"/>
    <property type="molecule type" value="Genomic_DNA"/>
</dbReference>
<dbReference type="RefSeq" id="WP_006083579.1">
    <property type="nucleotide sequence ID" value="NC_007954.1"/>
</dbReference>
<dbReference type="SMR" id="Q12ST8"/>
<dbReference type="STRING" id="318161.Sden_0191"/>
<dbReference type="GeneID" id="94726207"/>
<dbReference type="KEGG" id="sdn:Sden_0191"/>
<dbReference type="eggNOG" id="COG0257">
    <property type="taxonomic scope" value="Bacteria"/>
</dbReference>
<dbReference type="HOGENOM" id="CLU_135723_6_2_6"/>
<dbReference type="OrthoDB" id="9802520at2"/>
<dbReference type="Proteomes" id="UP000001982">
    <property type="component" value="Chromosome"/>
</dbReference>
<dbReference type="GO" id="GO:0005737">
    <property type="term" value="C:cytoplasm"/>
    <property type="evidence" value="ECO:0007669"/>
    <property type="project" value="UniProtKB-ARBA"/>
</dbReference>
<dbReference type="GO" id="GO:1990904">
    <property type="term" value="C:ribonucleoprotein complex"/>
    <property type="evidence" value="ECO:0007669"/>
    <property type="project" value="UniProtKB-KW"/>
</dbReference>
<dbReference type="GO" id="GO:0005840">
    <property type="term" value="C:ribosome"/>
    <property type="evidence" value="ECO:0007669"/>
    <property type="project" value="UniProtKB-KW"/>
</dbReference>
<dbReference type="GO" id="GO:0003735">
    <property type="term" value="F:structural constituent of ribosome"/>
    <property type="evidence" value="ECO:0007669"/>
    <property type="project" value="InterPro"/>
</dbReference>
<dbReference type="GO" id="GO:0006412">
    <property type="term" value="P:translation"/>
    <property type="evidence" value="ECO:0007669"/>
    <property type="project" value="UniProtKB-UniRule"/>
</dbReference>
<dbReference type="HAMAP" id="MF_00251">
    <property type="entry name" value="Ribosomal_bL36"/>
    <property type="match status" value="1"/>
</dbReference>
<dbReference type="InterPro" id="IPR000473">
    <property type="entry name" value="Ribosomal_bL36"/>
</dbReference>
<dbReference type="InterPro" id="IPR035977">
    <property type="entry name" value="Ribosomal_bL36_sp"/>
</dbReference>
<dbReference type="NCBIfam" id="TIGR01022">
    <property type="entry name" value="rpmJ_bact"/>
    <property type="match status" value="1"/>
</dbReference>
<dbReference type="PANTHER" id="PTHR42888">
    <property type="entry name" value="50S RIBOSOMAL PROTEIN L36, CHLOROPLASTIC"/>
    <property type="match status" value="1"/>
</dbReference>
<dbReference type="PANTHER" id="PTHR42888:SF1">
    <property type="entry name" value="LARGE RIBOSOMAL SUBUNIT PROTEIN BL36C"/>
    <property type="match status" value="1"/>
</dbReference>
<dbReference type="Pfam" id="PF00444">
    <property type="entry name" value="Ribosomal_L36"/>
    <property type="match status" value="1"/>
</dbReference>
<dbReference type="SUPFAM" id="SSF57840">
    <property type="entry name" value="Ribosomal protein L36"/>
    <property type="match status" value="1"/>
</dbReference>
<dbReference type="PROSITE" id="PS00828">
    <property type="entry name" value="RIBOSOMAL_L36"/>
    <property type="match status" value="1"/>
</dbReference>
<feature type="chain" id="PRO_0000344719" description="Large ribosomal subunit protein bL36">
    <location>
        <begin position="1"/>
        <end position="37"/>
    </location>
</feature>
<comment type="similarity">
    <text evidence="1">Belongs to the bacterial ribosomal protein bL36 family.</text>
</comment>
<comment type="sequence caution" evidence="2">
    <conflict type="erroneous initiation">
        <sequence resource="EMBL-CDS" id="ABE53488"/>
    </conflict>
</comment>
<reference key="1">
    <citation type="submission" date="2006-03" db="EMBL/GenBank/DDBJ databases">
        <title>Complete sequence of Shewanella denitrificans OS217.</title>
        <authorList>
            <consortium name="US DOE Joint Genome Institute"/>
            <person name="Copeland A."/>
            <person name="Lucas S."/>
            <person name="Lapidus A."/>
            <person name="Barry K."/>
            <person name="Detter J.C."/>
            <person name="Glavina del Rio T."/>
            <person name="Hammon N."/>
            <person name="Israni S."/>
            <person name="Dalin E."/>
            <person name="Tice H."/>
            <person name="Pitluck S."/>
            <person name="Brettin T."/>
            <person name="Bruce D."/>
            <person name="Han C."/>
            <person name="Tapia R."/>
            <person name="Gilna P."/>
            <person name="Kiss H."/>
            <person name="Schmutz J."/>
            <person name="Larimer F."/>
            <person name="Land M."/>
            <person name="Hauser L."/>
            <person name="Kyrpides N."/>
            <person name="Lykidis A."/>
            <person name="Richardson P."/>
        </authorList>
    </citation>
    <scope>NUCLEOTIDE SEQUENCE [LARGE SCALE GENOMIC DNA]</scope>
    <source>
        <strain>OS217 / ATCC BAA-1090 / DSM 15013</strain>
    </source>
</reference>
<proteinExistence type="inferred from homology"/>
<gene>
    <name evidence="1" type="primary">rpmJ</name>
    <name type="ordered locus">Sden_0191</name>
</gene>
<evidence type="ECO:0000255" key="1">
    <source>
        <dbReference type="HAMAP-Rule" id="MF_00251"/>
    </source>
</evidence>
<evidence type="ECO:0000305" key="2"/>